<organism>
    <name type="scientific">Sulfolobus acidocaldarius (strain ATCC 33909 / DSM 639 / JCM 8929 / NBRC 15157 / NCIMB 11770)</name>
    <dbReference type="NCBI Taxonomy" id="330779"/>
    <lineage>
        <taxon>Archaea</taxon>
        <taxon>Thermoproteota</taxon>
        <taxon>Thermoprotei</taxon>
        <taxon>Sulfolobales</taxon>
        <taxon>Sulfolobaceae</taxon>
        <taxon>Sulfolobus</taxon>
    </lineage>
</organism>
<feature type="chain" id="PRO_0000121361" description="DNA-directed RNA polymerase subunit Rpo10">
    <location>
        <begin position="1"/>
        <end position="66"/>
    </location>
</feature>
<feature type="binding site" evidence="1 3 7 8 9">
    <location>
        <position position="7"/>
    </location>
    <ligand>
        <name>Zn(2+)</name>
        <dbReference type="ChEBI" id="CHEBI:29105"/>
    </ligand>
</feature>
<feature type="binding site" evidence="1 3 7 8 9">
    <location>
        <position position="10"/>
    </location>
    <ligand>
        <name>Zn(2+)</name>
        <dbReference type="ChEBI" id="CHEBI:29105"/>
    </ligand>
</feature>
<feature type="binding site" evidence="1 3 7 8 9">
    <location>
        <position position="44"/>
    </location>
    <ligand>
        <name>Zn(2+)</name>
        <dbReference type="ChEBI" id="CHEBI:29105"/>
    </ligand>
</feature>
<feature type="binding site" evidence="1 3 7 8 9">
    <location>
        <position position="45"/>
    </location>
    <ligand>
        <name>Zn(2+)</name>
        <dbReference type="ChEBI" id="CHEBI:29105"/>
    </ligand>
</feature>
<feature type="sequence conflict" description="In Ref. 3; AA sequence." evidence="6" ref="3">
    <original>K</original>
    <variation>D</variation>
    <location>
        <position position="17"/>
    </location>
</feature>
<feature type="sequence conflict" description="In Ref. 3; AA sequence." evidence="6" ref="3">
    <original>E</original>
    <variation>I</variation>
    <location>
        <position position="19"/>
    </location>
</feature>
<feature type="strand" evidence="10">
    <location>
        <begin position="8"/>
        <end position="10"/>
    </location>
</feature>
<feature type="helix" evidence="10">
    <location>
        <begin position="15"/>
        <end position="17"/>
    </location>
</feature>
<feature type="helix" evidence="10">
    <location>
        <begin position="18"/>
        <end position="25"/>
    </location>
</feature>
<feature type="turn" evidence="10">
    <location>
        <begin position="26"/>
        <end position="28"/>
    </location>
</feature>
<feature type="helix" evidence="10">
    <location>
        <begin position="31"/>
        <end position="38"/>
    </location>
</feature>
<feature type="helix" evidence="10">
    <location>
        <begin position="43"/>
        <end position="50"/>
    </location>
</feature>
<feature type="helix" evidence="10">
    <location>
        <begin position="56"/>
        <end position="59"/>
    </location>
</feature>
<evidence type="ECO:0000255" key="1">
    <source>
        <dbReference type="HAMAP-Rule" id="MF_00250"/>
    </source>
</evidence>
<evidence type="ECO:0000269" key="2">
    <source>
    </source>
</evidence>
<evidence type="ECO:0000269" key="3">
    <source>
    </source>
</evidence>
<evidence type="ECO:0000269" key="4">
    <source ref="4"/>
</evidence>
<evidence type="ECO:0000303" key="5">
    <source>
    </source>
</evidence>
<evidence type="ECO:0000305" key="6"/>
<evidence type="ECO:0000312" key="7">
    <source>
        <dbReference type="PDB" id="7OK0"/>
    </source>
</evidence>
<evidence type="ECO:0000312" key="8">
    <source>
        <dbReference type="PDB" id="7OQ4"/>
    </source>
</evidence>
<evidence type="ECO:0000312" key="9">
    <source>
        <dbReference type="PDB" id="7OQY"/>
    </source>
</evidence>
<evidence type="ECO:0007829" key="10">
    <source>
        <dbReference type="PDB" id="7OQY"/>
    </source>
</evidence>
<sequence length="66" mass="7662">MIIPIRCFTCGAVVADKWEPFSNRVMGGEDPEKVLTELGVNRYCCRRMLLSHVNIIREIIHYTRPI</sequence>
<accession>P39472</accession>
<accession>Q4JCG5</accession>
<dbReference type="EC" id="2.7.7.6" evidence="1 4"/>
<dbReference type="EMBL" id="X80194">
    <property type="protein sequence ID" value="CAA56484.1"/>
    <property type="molecule type" value="Genomic_DNA"/>
</dbReference>
<dbReference type="EMBL" id="CP000077">
    <property type="protein sequence ID" value="AAY79514.1"/>
    <property type="molecule type" value="Genomic_DNA"/>
</dbReference>
<dbReference type="PIR" id="S47027">
    <property type="entry name" value="S47027"/>
</dbReference>
<dbReference type="RefSeq" id="WP_011277015.1">
    <property type="nucleotide sequence ID" value="NC_007181.1"/>
</dbReference>
<dbReference type="PDB" id="7OK0">
    <property type="method" value="EM"/>
    <property type="resolution" value="2.90 A"/>
    <property type="chains" value="N=1-66"/>
</dbReference>
<dbReference type="PDB" id="7OQ4">
    <property type="method" value="EM"/>
    <property type="resolution" value="3.27 A"/>
    <property type="chains" value="N=1-66"/>
</dbReference>
<dbReference type="PDB" id="7OQY">
    <property type="method" value="EM"/>
    <property type="resolution" value="2.61 A"/>
    <property type="chains" value="N=1-66"/>
</dbReference>
<dbReference type="PDBsum" id="7OK0"/>
<dbReference type="PDBsum" id="7OQ4"/>
<dbReference type="PDBsum" id="7OQY"/>
<dbReference type="EMDB" id="EMD-12960"/>
<dbReference type="EMDB" id="EMD-13026"/>
<dbReference type="EMDB" id="EMD-13034"/>
<dbReference type="SMR" id="P39472"/>
<dbReference type="STRING" id="330779.Saci_0087"/>
<dbReference type="GeneID" id="14550617"/>
<dbReference type="KEGG" id="sai:Saci_0087"/>
<dbReference type="PATRIC" id="fig|330779.12.peg.81"/>
<dbReference type="eggNOG" id="arCOG04244">
    <property type="taxonomic scope" value="Archaea"/>
</dbReference>
<dbReference type="HOGENOM" id="CLU_143122_1_1_2"/>
<dbReference type="Proteomes" id="UP000001018">
    <property type="component" value="Chromosome"/>
</dbReference>
<dbReference type="GO" id="GO:0005737">
    <property type="term" value="C:cytoplasm"/>
    <property type="evidence" value="ECO:0007669"/>
    <property type="project" value="UniProtKB-SubCell"/>
</dbReference>
<dbReference type="GO" id="GO:0000428">
    <property type="term" value="C:DNA-directed RNA polymerase complex"/>
    <property type="evidence" value="ECO:0000314"/>
    <property type="project" value="UniProtKB"/>
</dbReference>
<dbReference type="GO" id="GO:0003677">
    <property type="term" value="F:DNA binding"/>
    <property type="evidence" value="ECO:0007669"/>
    <property type="project" value="InterPro"/>
</dbReference>
<dbReference type="GO" id="GO:0003899">
    <property type="term" value="F:DNA-directed RNA polymerase activity"/>
    <property type="evidence" value="ECO:0000314"/>
    <property type="project" value="UniProtKB"/>
</dbReference>
<dbReference type="GO" id="GO:0008270">
    <property type="term" value="F:zinc ion binding"/>
    <property type="evidence" value="ECO:0007669"/>
    <property type="project" value="UniProtKB-UniRule"/>
</dbReference>
<dbReference type="GO" id="GO:0006351">
    <property type="term" value="P:DNA-templated transcription"/>
    <property type="evidence" value="ECO:0000314"/>
    <property type="project" value="UniProtKB"/>
</dbReference>
<dbReference type="FunFam" id="1.10.10.60:FF:000335">
    <property type="entry name" value="DNA-directed RNA polymerase subunit N, putative"/>
    <property type="match status" value="1"/>
</dbReference>
<dbReference type="Gene3D" id="1.10.10.60">
    <property type="entry name" value="Homeodomain-like"/>
    <property type="match status" value="1"/>
</dbReference>
<dbReference type="HAMAP" id="MF_00250">
    <property type="entry name" value="RNApol_arch_Rpo10"/>
    <property type="match status" value="1"/>
</dbReference>
<dbReference type="InterPro" id="IPR023580">
    <property type="entry name" value="RNA_pol_su_RPB10"/>
</dbReference>
<dbReference type="InterPro" id="IPR020789">
    <property type="entry name" value="RNA_pol_suN_Zn-BS"/>
</dbReference>
<dbReference type="InterPro" id="IPR000268">
    <property type="entry name" value="RPABC5/Rpb10"/>
</dbReference>
<dbReference type="NCBIfam" id="NF003089">
    <property type="entry name" value="PRK04016.1"/>
    <property type="match status" value="1"/>
</dbReference>
<dbReference type="PANTHER" id="PTHR23431:SF3">
    <property type="entry name" value="DNA-DIRECTED RNA POLYMERASES I, II, AND III SUBUNIT RPABC5"/>
    <property type="match status" value="1"/>
</dbReference>
<dbReference type="PANTHER" id="PTHR23431">
    <property type="entry name" value="DNA-DIRECTED RNA POLYMERASES I, II, AND III SUBUNIT RPABC5 FAMILY MEMBER"/>
    <property type="match status" value="1"/>
</dbReference>
<dbReference type="Pfam" id="PF01194">
    <property type="entry name" value="RNA_pol_N"/>
    <property type="match status" value="1"/>
</dbReference>
<dbReference type="PIRSF" id="PIRSF005653">
    <property type="entry name" value="RNA_pol_N/8_sub"/>
    <property type="match status" value="1"/>
</dbReference>
<dbReference type="SUPFAM" id="SSF46924">
    <property type="entry name" value="RNA polymerase subunit RPB10"/>
    <property type="match status" value="1"/>
</dbReference>
<dbReference type="PROSITE" id="PS01112">
    <property type="entry name" value="RNA_POL_N_8KD"/>
    <property type="match status" value="1"/>
</dbReference>
<keyword id="KW-0002">3D-structure</keyword>
<keyword id="KW-0963">Cytoplasm</keyword>
<keyword id="KW-0903">Direct protein sequencing</keyword>
<keyword id="KW-0240">DNA-directed RNA polymerase</keyword>
<keyword id="KW-0479">Metal-binding</keyword>
<keyword id="KW-0548">Nucleotidyltransferase</keyword>
<keyword id="KW-1185">Reference proteome</keyword>
<keyword id="KW-0804">Transcription</keyword>
<keyword id="KW-0808">Transferase</keyword>
<keyword id="KW-0862">Zinc</keyword>
<reference key="1">
    <citation type="journal article" date="1995" name="Proc. Natl. Acad. Sci. U.S.A.">
        <title>Transcription in archaea: similarity to that in eucarya.</title>
        <authorList>
            <person name="Langer D."/>
            <person name="Hain J."/>
            <person name="Thuriaux P."/>
            <person name="Zillig W."/>
        </authorList>
    </citation>
    <scope>NUCLEOTIDE SEQUENCE [GENOMIC DNA]</scope>
    <source>
        <strain>ATCC 33909 / DSM 639 / JCM 8929 / NBRC 15157 / NCIMB 11770</strain>
    </source>
</reference>
<reference key="2">
    <citation type="journal article" date="2005" name="J. Bacteriol.">
        <title>The genome of Sulfolobus acidocaldarius, a model organism of the Crenarchaeota.</title>
        <authorList>
            <person name="Chen L."/>
            <person name="Bruegger K."/>
            <person name="Skovgaard M."/>
            <person name="Redder P."/>
            <person name="She Q."/>
            <person name="Torarinsson E."/>
            <person name="Greve B."/>
            <person name="Awayez M."/>
            <person name="Zibat A."/>
            <person name="Klenk H.-P."/>
            <person name="Garrett R.A."/>
        </authorList>
    </citation>
    <scope>NUCLEOTIDE SEQUENCE [LARGE SCALE GENOMIC DNA]</scope>
    <source>
        <strain>ATCC 33909 / DSM 639 / JCM 8929 / NBRC 15157 / NCIMB 11770</strain>
    </source>
</reference>
<reference key="3">
    <citation type="journal article" date="1992" name="Proc. Natl. Acad. Sci. U.S.A.">
        <title>Component H of the DNA-dependent RNA polymerases of Archaea is homologous to a subunit shared by the three eucaryal nuclear RNA polymerases.</title>
        <authorList>
            <person name="Klenk H.-P."/>
            <person name="Palm P."/>
            <person name="Lottspeich F."/>
            <person name="Zillig W."/>
        </authorList>
    </citation>
    <scope>PROTEIN SEQUENCE OF 1-23</scope>
    <scope>SUBUNIT</scope>
    <source>
        <strain>ATCC 33909 / DSM 639 / JCM 8929 / NBRC 15157 / NCIMB 11770</strain>
    </source>
</reference>
<reference key="4">
    <citation type="journal article" date="1994" name="Syst. Appl. Microbiol.">
        <title>Structure and Function of the DNA-Dependent RNA Polymerase of Sulfolobus.</title>
        <authorList>
            <person name="Lanzendorfer M."/>
            <person name="Langer D."/>
            <person name="Hain J."/>
            <person name="Klenk H.-P."/>
            <person name="Holz I."/>
            <person name="Arnold-Ammer I."/>
            <person name="Zillig W."/>
        </authorList>
    </citation>
    <scope>FUNCTION</scope>
    <scope>CATALYTIC ACTIVITY</scope>
    <scope>SUBUNIT</scope>
    <source>
        <strain>ATCC 33909 / DSM 639 / JCM 8929 / NBRC 15157 / NCIMB 11770</strain>
    </source>
</reference>
<reference evidence="7 8 9" key="5">
    <citation type="journal article" date="2021" name="Nat. Commun.">
        <title>Structural basis of RNA polymerase inhibition by viral and host factors.</title>
        <authorList>
            <person name="Pilotto S."/>
            <person name="Fouqueau T."/>
            <person name="Lukoyanova N."/>
            <person name="Sheppard C."/>
            <person name="Lucas-Staat S."/>
            <person name="Diaz-Santin L.M."/>
            <person name="Matelska D."/>
            <person name="Prangishvili D."/>
            <person name="Cheung A.C.M."/>
            <person name="Werner F."/>
        </authorList>
    </citation>
    <scope>STRUCTURE BY ELECTRON MICROSCOPY (2.61 ANGSTROMS) OF RNAP WITH AND WITHOUT INHIBITORS</scope>
    <scope>COFACTOR</scope>
    <scope>SUBUNIT</scope>
    <source>
        <strain>ATCC 33909 / DSM 639 / JCM 8929 / NBRC 15157 / NCIMB 11770</strain>
    </source>
</reference>
<comment type="function">
    <text evidence="1 4">DNA-dependent RNA polymerase (RNAP) catalyzes the transcription of DNA into RNA using the four ribonucleoside triphosphates as substrates.</text>
</comment>
<comment type="catalytic activity">
    <reaction evidence="1 4">
        <text>RNA(n) + a ribonucleoside 5'-triphosphate = RNA(n+1) + diphosphate</text>
        <dbReference type="Rhea" id="RHEA:21248"/>
        <dbReference type="Rhea" id="RHEA-COMP:14527"/>
        <dbReference type="Rhea" id="RHEA-COMP:17342"/>
        <dbReference type="ChEBI" id="CHEBI:33019"/>
        <dbReference type="ChEBI" id="CHEBI:61557"/>
        <dbReference type="ChEBI" id="CHEBI:140395"/>
        <dbReference type="EC" id="2.7.7.6"/>
    </reaction>
</comment>
<comment type="cofactor">
    <cofactor evidence="1 3 7 8 9">
        <name>Zn(2+)</name>
        <dbReference type="ChEBI" id="CHEBI:29105"/>
    </cofactor>
    <text evidence="1 3 7 8 9">Binds 1 zinc ion.</text>
</comment>
<comment type="subunit">
    <text evidence="2 3 4 7 8 9">Part of the 13-subunit RNA polymerase complex.</text>
</comment>
<comment type="subcellular location">
    <subcellularLocation>
        <location evidence="1">Cytoplasm</location>
    </subcellularLocation>
</comment>
<comment type="similarity">
    <text evidence="1">Belongs to the archaeal Rpo10/eukaryotic RPB10 RNA polymerase subunit family.</text>
</comment>
<name>RPO10_SULAC</name>
<protein>
    <recommendedName>
        <fullName evidence="1">DNA-directed RNA polymerase subunit Rpo10</fullName>
        <ecNumber evidence="1 4">2.7.7.6</ecNumber>
    </recommendedName>
    <alternativeName>
        <fullName evidence="1 5">DNA-directed RNA polymerase subunit N</fullName>
    </alternativeName>
</protein>
<gene>
    <name evidence="1" type="primary">rpo10</name>
    <name evidence="1 5" type="synonym">rpoN</name>
    <name type="ordered locus">Saci_0087</name>
</gene>
<proteinExistence type="evidence at protein level"/>